<organism>
    <name type="scientific">Helicobacter pylori (strain Shi470)</name>
    <dbReference type="NCBI Taxonomy" id="512562"/>
    <lineage>
        <taxon>Bacteria</taxon>
        <taxon>Pseudomonadati</taxon>
        <taxon>Campylobacterota</taxon>
        <taxon>Epsilonproteobacteria</taxon>
        <taxon>Campylobacterales</taxon>
        <taxon>Helicobacteraceae</taxon>
        <taxon>Helicobacter</taxon>
    </lineage>
</organism>
<accession>B2USY5</accession>
<evidence type="ECO:0000255" key="1">
    <source>
        <dbReference type="HAMAP-Rule" id="MF_00097"/>
    </source>
</evidence>
<name>THIE_HELPS</name>
<sequence length="219" mass="23888">MFDANCLKLMFVAGSQDFYHIKGGKNDRINALLDALELALQSKITAFQFRQKGDLALQDPIEIKQLALECQKLCQKYGAPFIVNDEVQLALELKADGVHVGQEDMAIEEVMALCKKRLFIGLSVNTLEQALKVRHLDGVAYFGVGPIFPTQSKKDKQVVGVELLKKIKDSGIKKPLIAIGGITAHNASKLREYGGIAVISAITQAKDKALAVGKLLKNA</sequence>
<feature type="chain" id="PRO_1000093669" description="Thiamine-phosphate synthase">
    <location>
        <begin position="1"/>
        <end position="219"/>
    </location>
</feature>
<feature type="binding site" evidence="1">
    <location>
        <begin position="48"/>
        <end position="52"/>
    </location>
    <ligand>
        <name>4-amino-2-methyl-5-(diphosphooxymethyl)pyrimidine</name>
        <dbReference type="ChEBI" id="CHEBI:57841"/>
    </ligand>
</feature>
<feature type="binding site" evidence="1">
    <location>
        <position position="84"/>
    </location>
    <ligand>
        <name>4-amino-2-methyl-5-(diphosphooxymethyl)pyrimidine</name>
        <dbReference type="ChEBI" id="CHEBI:57841"/>
    </ligand>
</feature>
<feature type="binding site" evidence="1">
    <location>
        <position position="85"/>
    </location>
    <ligand>
        <name>Mg(2+)</name>
        <dbReference type="ChEBI" id="CHEBI:18420"/>
    </ligand>
</feature>
<feature type="binding site" evidence="1">
    <location>
        <position position="104"/>
    </location>
    <ligand>
        <name>Mg(2+)</name>
        <dbReference type="ChEBI" id="CHEBI:18420"/>
    </ligand>
</feature>
<feature type="binding site" evidence="1">
    <location>
        <position position="123"/>
    </location>
    <ligand>
        <name>4-amino-2-methyl-5-(diphosphooxymethyl)pyrimidine</name>
        <dbReference type="ChEBI" id="CHEBI:57841"/>
    </ligand>
</feature>
<feature type="binding site" evidence="1">
    <location>
        <begin position="150"/>
        <end position="152"/>
    </location>
    <ligand>
        <name>2-[(2R,5Z)-2-carboxy-4-methylthiazol-5(2H)-ylidene]ethyl phosphate</name>
        <dbReference type="ChEBI" id="CHEBI:62899"/>
    </ligand>
</feature>
<feature type="binding site" evidence="1">
    <location>
        <position position="153"/>
    </location>
    <ligand>
        <name>4-amino-2-methyl-5-(diphosphooxymethyl)pyrimidine</name>
        <dbReference type="ChEBI" id="CHEBI:57841"/>
    </ligand>
</feature>
<feature type="binding site" evidence="1">
    <location>
        <position position="181"/>
    </location>
    <ligand>
        <name>2-[(2R,5Z)-2-carboxy-4-methylthiazol-5(2H)-ylidene]ethyl phosphate</name>
        <dbReference type="ChEBI" id="CHEBI:62899"/>
    </ligand>
</feature>
<feature type="binding site" evidence="1">
    <location>
        <begin position="199"/>
        <end position="200"/>
    </location>
    <ligand>
        <name>2-[(2R,5Z)-2-carboxy-4-methylthiazol-5(2H)-ylidene]ethyl phosphate</name>
        <dbReference type="ChEBI" id="CHEBI:62899"/>
    </ligand>
</feature>
<proteinExistence type="inferred from homology"/>
<reference key="1">
    <citation type="submission" date="2008-05" db="EMBL/GenBank/DDBJ databases">
        <title>Genome sequence of Helicobacter pylori from the remote Amazon: traces of Asian ancestry of the first Americans.</title>
        <authorList>
            <person name="Kersulyte D."/>
            <person name="Kalia A."/>
            <person name="Gilman R.H."/>
            <person name="Berg D.E."/>
        </authorList>
    </citation>
    <scope>NUCLEOTIDE SEQUENCE [LARGE SCALE GENOMIC DNA]</scope>
    <source>
        <strain>Shi470</strain>
    </source>
</reference>
<keyword id="KW-0460">Magnesium</keyword>
<keyword id="KW-0479">Metal-binding</keyword>
<keyword id="KW-0784">Thiamine biosynthesis</keyword>
<keyword id="KW-0808">Transferase</keyword>
<comment type="function">
    <text evidence="1">Condenses 4-methyl-5-(beta-hydroxyethyl)thiazole monophosphate (THZ-P) and 2-methyl-4-amino-5-hydroxymethyl pyrimidine pyrophosphate (HMP-PP) to form thiamine monophosphate (TMP).</text>
</comment>
<comment type="catalytic activity">
    <reaction evidence="1">
        <text>2-[(2R,5Z)-2-carboxy-4-methylthiazol-5(2H)-ylidene]ethyl phosphate + 4-amino-2-methyl-5-(diphosphooxymethyl)pyrimidine + 2 H(+) = thiamine phosphate + CO2 + diphosphate</text>
        <dbReference type="Rhea" id="RHEA:47844"/>
        <dbReference type="ChEBI" id="CHEBI:15378"/>
        <dbReference type="ChEBI" id="CHEBI:16526"/>
        <dbReference type="ChEBI" id="CHEBI:33019"/>
        <dbReference type="ChEBI" id="CHEBI:37575"/>
        <dbReference type="ChEBI" id="CHEBI:57841"/>
        <dbReference type="ChEBI" id="CHEBI:62899"/>
        <dbReference type="EC" id="2.5.1.3"/>
    </reaction>
</comment>
<comment type="catalytic activity">
    <reaction evidence="1">
        <text>2-(2-carboxy-4-methylthiazol-5-yl)ethyl phosphate + 4-amino-2-methyl-5-(diphosphooxymethyl)pyrimidine + 2 H(+) = thiamine phosphate + CO2 + diphosphate</text>
        <dbReference type="Rhea" id="RHEA:47848"/>
        <dbReference type="ChEBI" id="CHEBI:15378"/>
        <dbReference type="ChEBI" id="CHEBI:16526"/>
        <dbReference type="ChEBI" id="CHEBI:33019"/>
        <dbReference type="ChEBI" id="CHEBI:37575"/>
        <dbReference type="ChEBI" id="CHEBI:57841"/>
        <dbReference type="ChEBI" id="CHEBI:62890"/>
        <dbReference type="EC" id="2.5.1.3"/>
    </reaction>
</comment>
<comment type="catalytic activity">
    <reaction evidence="1">
        <text>4-methyl-5-(2-phosphooxyethyl)-thiazole + 4-amino-2-methyl-5-(diphosphooxymethyl)pyrimidine + H(+) = thiamine phosphate + diphosphate</text>
        <dbReference type="Rhea" id="RHEA:22328"/>
        <dbReference type="ChEBI" id="CHEBI:15378"/>
        <dbReference type="ChEBI" id="CHEBI:33019"/>
        <dbReference type="ChEBI" id="CHEBI:37575"/>
        <dbReference type="ChEBI" id="CHEBI:57841"/>
        <dbReference type="ChEBI" id="CHEBI:58296"/>
        <dbReference type="EC" id="2.5.1.3"/>
    </reaction>
</comment>
<comment type="cofactor">
    <cofactor evidence="1">
        <name>Mg(2+)</name>
        <dbReference type="ChEBI" id="CHEBI:18420"/>
    </cofactor>
    <text evidence="1">Binds 1 Mg(2+) ion per subunit.</text>
</comment>
<comment type="pathway">
    <text evidence="1">Cofactor biosynthesis; thiamine diphosphate biosynthesis; thiamine phosphate from 4-amino-2-methyl-5-diphosphomethylpyrimidine and 4-methyl-5-(2-phosphoethyl)-thiazole: step 1/1.</text>
</comment>
<comment type="similarity">
    <text evidence="1">Belongs to the thiamine-phosphate synthase family.</text>
</comment>
<dbReference type="EC" id="2.5.1.3" evidence="1"/>
<dbReference type="EMBL" id="CP001072">
    <property type="protein sequence ID" value="ACD47967.1"/>
    <property type="molecule type" value="Genomic_DNA"/>
</dbReference>
<dbReference type="RefSeq" id="WP_000458978.1">
    <property type="nucleotide sequence ID" value="NC_010698.2"/>
</dbReference>
<dbReference type="SMR" id="B2USY5"/>
<dbReference type="KEGG" id="hps:HPSH_02585"/>
<dbReference type="HOGENOM" id="CLU_018272_3_2_7"/>
<dbReference type="UniPathway" id="UPA00060">
    <property type="reaction ID" value="UER00141"/>
</dbReference>
<dbReference type="GO" id="GO:0005737">
    <property type="term" value="C:cytoplasm"/>
    <property type="evidence" value="ECO:0007669"/>
    <property type="project" value="TreeGrafter"/>
</dbReference>
<dbReference type="GO" id="GO:0000287">
    <property type="term" value="F:magnesium ion binding"/>
    <property type="evidence" value="ECO:0007669"/>
    <property type="project" value="UniProtKB-UniRule"/>
</dbReference>
<dbReference type="GO" id="GO:0004789">
    <property type="term" value="F:thiamine-phosphate diphosphorylase activity"/>
    <property type="evidence" value="ECO:0007669"/>
    <property type="project" value="UniProtKB-UniRule"/>
</dbReference>
<dbReference type="GO" id="GO:0009228">
    <property type="term" value="P:thiamine biosynthetic process"/>
    <property type="evidence" value="ECO:0007669"/>
    <property type="project" value="UniProtKB-KW"/>
</dbReference>
<dbReference type="GO" id="GO:0009229">
    <property type="term" value="P:thiamine diphosphate biosynthetic process"/>
    <property type="evidence" value="ECO:0007669"/>
    <property type="project" value="UniProtKB-UniRule"/>
</dbReference>
<dbReference type="CDD" id="cd00564">
    <property type="entry name" value="TMP_TenI"/>
    <property type="match status" value="1"/>
</dbReference>
<dbReference type="FunFam" id="3.20.20.70:FF:000096">
    <property type="entry name" value="Thiamine-phosphate synthase"/>
    <property type="match status" value="1"/>
</dbReference>
<dbReference type="Gene3D" id="3.20.20.70">
    <property type="entry name" value="Aldolase class I"/>
    <property type="match status" value="1"/>
</dbReference>
<dbReference type="HAMAP" id="MF_00097">
    <property type="entry name" value="TMP_synthase"/>
    <property type="match status" value="1"/>
</dbReference>
<dbReference type="InterPro" id="IPR013785">
    <property type="entry name" value="Aldolase_TIM"/>
</dbReference>
<dbReference type="InterPro" id="IPR036206">
    <property type="entry name" value="ThiamineP_synth_sf"/>
</dbReference>
<dbReference type="InterPro" id="IPR022998">
    <property type="entry name" value="ThiamineP_synth_TenI"/>
</dbReference>
<dbReference type="InterPro" id="IPR034291">
    <property type="entry name" value="TMP_synthase"/>
</dbReference>
<dbReference type="NCBIfam" id="TIGR00693">
    <property type="entry name" value="thiE"/>
    <property type="match status" value="1"/>
</dbReference>
<dbReference type="PANTHER" id="PTHR20857">
    <property type="entry name" value="THIAMINE-PHOSPHATE PYROPHOSPHORYLASE"/>
    <property type="match status" value="1"/>
</dbReference>
<dbReference type="PANTHER" id="PTHR20857:SF15">
    <property type="entry name" value="THIAMINE-PHOSPHATE SYNTHASE"/>
    <property type="match status" value="1"/>
</dbReference>
<dbReference type="Pfam" id="PF02581">
    <property type="entry name" value="TMP-TENI"/>
    <property type="match status" value="1"/>
</dbReference>
<dbReference type="SUPFAM" id="SSF51391">
    <property type="entry name" value="Thiamin phosphate synthase"/>
    <property type="match status" value="1"/>
</dbReference>
<gene>
    <name evidence="1" type="primary">thiE</name>
    <name type="ordered locus">HPSH_02585</name>
</gene>
<protein>
    <recommendedName>
        <fullName evidence="1">Thiamine-phosphate synthase</fullName>
        <shortName evidence="1">TP synthase</shortName>
        <shortName evidence="1">TPS</shortName>
        <ecNumber evidence="1">2.5.1.3</ecNumber>
    </recommendedName>
    <alternativeName>
        <fullName evidence="1">Thiamine-phosphate pyrophosphorylase</fullName>
        <shortName evidence="1">TMP pyrophosphorylase</shortName>
        <shortName evidence="1">TMP-PPase</shortName>
    </alternativeName>
</protein>